<evidence type="ECO:0000250" key="1">
    <source>
        <dbReference type="UniProtKB" id="F5HCH8"/>
    </source>
</evidence>
<evidence type="ECO:0000255" key="2">
    <source>
        <dbReference type="HAMAP-Rule" id="MF_04036"/>
    </source>
</evidence>
<evidence type="ECO:0000255" key="3">
    <source>
        <dbReference type="PROSITE-ProRule" id="PRU01369"/>
    </source>
</evidence>
<reference key="1">
    <citation type="submission" date="1996-04" db="EMBL/GenBank/DDBJ databases">
        <authorList>
            <person name="Milne R.S.B."/>
            <person name="Mathers K.E."/>
            <person name="Booth J.C."/>
        </authorList>
    </citation>
    <scope>NUCLEOTIDE SEQUENCE [GENOMIC DNA]</scope>
</reference>
<organism>
    <name type="scientific">Human cytomegalovirus (strain 119)</name>
    <name type="common">HHV-5</name>
    <name type="synonym">Human herpesvirus 5</name>
    <dbReference type="NCBI Taxonomy" id="73483"/>
    <lineage>
        <taxon>Viruses</taxon>
        <taxon>Duplodnaviria</taxon>
        <taxon>Heunggongvirae</taxon>
        <taxon>Peploviricota</taxon>
        <taxon>Herviviricetes</taxon>
        <taxon>Herpesvirales</taxon>
        <taxon>Orthoherpesviridae</taxon>
        <taxon>Betaherpesvirinae</taxon>
        <taxon>Cytomegalovirus</taxon>
        <taxon>Cytomegalovirus humanbeta5</taxon>
        <taxon>Human cytomegalovirus</taxon>
    </lineage>
</organism>
<accession>Q68667</accession>
<protein>
    <recommendedName>
        <fullName evidence="2">Envelope glycoprotein L</fullName>
        <shortName evidence="2">gL</shortName>
    </recommendedName>
</protein>
<gene>
    <name evidence="2" type="primary">gL</name>
    <name type="synonym">UL115</name>
</gene>
<name>GL_HCMV1</name>
<proteinExistence type="inferred from homology"/>
<sequence length="278" mass="30831">MCRRPDCGFSFSPGPVILLWCCLLLSIVSSAAVNVAPTAAEKVPAECPELTRRCLLGEVFQGDEYESWLRPLVNVTGRDGPLSQLIRYRPVTPEAANSVLLDEAFLDTLALLYNNPDQLRALLTLLSSDTAPRWMTVMRGYSECGDGSPAVYTCVDDLCRGYDLTRLSYGRSIFTEHVLGFELVPPSLFNVVVAIRNEATRTNRAVRLPVSTAAAPEGITLFYGLYNAVKEFCLRHQLDPPLLRHLDKYYAGLPPELKQTRVNLPAHSRYGPQAVDAR</sequence>
<keyword id="KW-1015">Disulfide bond</keyword>
<keyword id="KW-1169">Fusion of virus membrane with host cell membrane</keyword>
<keyword id="KW-1168">Fusion of virus membrane with host membrane</keyword>
<keyword id="KW-0325">Glycoprotein</keyword>
<keyword id="KW-1032">Host cell membrane</keyword>
<keyword id="KW-1040">Host Golgi apparatus</keyword>
<keyword id="KW-1043">Host membrane</keyword>
<keyword id="KW-0945">Host-virus interaction</keyword>
<keyword id="KW-0472">Membrane</keyword>
<keyword id="KW-0732">Signal</keyword>
<keyword id="KW-1161">Viral attachment to host cell</keyword>
<keyword id="KW-1234">Viral attachment to host entry receptor</keyword>
<keyword id="KW-0261">Viral envelope protein</keyword>
<keyword id="KW-1162">Viral penetration into host cytoplasm</keyword>
<keyword id="KW-0946">Virion</keyword>
<keyword id="KW-1160">Virus entry into host cell</keyword>
<dbReference type="EMBL" id="U56912">
    <property type="protein sequence ID" value="AAA99164.1"/>
    <property type="molecule type" value="Genomic_DNA"/>
</dbReference>
<dbReference type="SMR" id="Q68667"/>
<dbReference type="GO" id="GO:0044177">
    <property type="term" value="C:host cell Golgi apparatus"/>
    <property type="evidence" value="ECO:0007669"/>
    <property type="project" value="UniProtKB-SubCell"/>
</dbReference>
<dbReference type="GO" id="GO:0020002">
    <property type="term" value="C:host cell plasma membrane"/>
    <property type="evidence" value="ECO:0007669"/>
    <property type="project" value="UniProtKB-SubCell"/>
</dbReference>
<dbReference type="GO" id="GO:0016020">
    <property type="term" value="C:membrane"/>
    <property type="evidence" value="ECO:0007669"/>
    <property type="project" value="UniProtKB-KW"/>
</dbReference>
<dbReference type="GO" id="GO:0019031">
    <property type="term" value="C:viral envelope"/>
    <property type="evidence" value="ECO:0007669"/>
    <property type="project" value="UniProtKB-UniRule"/>
</dbReference>
<dbReference type="GO" id="GO:0055036">
    <property type="term" value="C:virion membrane"/>
    <property type="evidence" value="ECO:0007669"/>
    <property type="project" value="UniProtKB-SubCell"/>
</dbReference>
<dbReference type="GO" id="GO:0098670">
    <property type="term" value="P:entry receptor-mediated virion attachment to host cell"/>
    <property type="evidence" value="ECO:0007669"/>
    <property type="project" value="UniProtKB-KW"/>
</dbReference>
<dbReference type="GO" id="GO:0019064">
    <property type="term" value="P:fusion of virus membrane with host plasma membrane"/>
    <property type="evidence" value="ECO:0007669"/>
    <property type="project" value="UniProtKB-UniRule"/>
</dbReference>
<dbReference type="GO" id="GO:0046718">
    <property type="term" value="P:symbiont entry into host cell"/>
    <property type="evidence" value="ECO:0007669"/>
    <property type="project" value="UniProtKB-KW"/>
</dbReference>
<dbReference type="HAMAP" id="MF_04036">
    <property type="entry name" value="HSV_GL_betahv"/>
    <property type="match status" value="1"/>
</dbReference>
<dbReference type="InterPro" id="IPR002689">
    <property type="entry name" value="Cytomegalo_gL"/>
</dbReference>
<dbReference type="Pfam" id="PF01801">
    <property type="entry name" value="Cytomega_gL"/>
    <property type="match status" value="1"/>
</dbReference>
<dbReference type="PROSITE" id="PS52025">
    <property type="entry name" value="GL_BHV"/>
    <property type="match status" value="1"/>
</dbReference>
<feature type="signal peptide" evidence="2">
    <location>
        <begin position="1"/>
        <end position="32"/>
    </location>
</feature>
<feature type="chain" id="PRO_0000038280" description="Envelope glycoprotein L" evidence="2">
    <location>
        <begin position="33"/>
        <end position="278"/>
    </location>
</feature>
<feature type="domain" description="gL betaherpesvirus-type" evidence="3">
    <location>
        <begin position="43"/>
        <end position="256"/>
    </location>
</feature>
<feature type="disulfide bond" description="Interchain" evidence="3">
    <location>
        <position position="47"/>
    </location>
</feature>
<feature type="disulfide bond" description="Interchain" evidence="3">
    <location>
        <position position="54"/>
    </location>
</feature>
<feature type="disulfide bond" description="Interchain" evidence="3">
    <location>
        <position position="144"/>
    </location>
</feature>
<feature type="disulfide bond" evidence="3">
    <location>
        <begin position="154"/>
        <end position="159"/>
    </location>
</feature>
<organismHost>
    <name type="scientific">Homo sapiens</name>
    <name type="common">Human</name>
    <dbReference type="NCBI Taxonomy" id="9606"/>
</organismHost>
<comment type="function">
    <text evidence="1 2">The heterodimer glycoprotein H-glycoprotein L is required for the fusion of viral and plasma membranes leading to virus entry into the host cell. Acts as a functional inhibitor of gH and maintains gH in an inhibited form. Upon binding to host integrins, gL dissociates from gH leading to activation of the viral fusion glycoproteins gB and gH (By similarity). In human cytomegalovirus, forms two distincts complexes to mediate viral entry, a trimer and a pentamer at the surface of the virion envelope. The gH-gL-gO trimer is required for infection in fibroblasts by interacting with host PDGFRA, and in glioblastoma cells by interacting with host EPHA2. The gH-gL-UL128-UL130-UL131A pentamer is essential for viral entry in epithelial, endothelial and myeloid cells via interaction with host NRP2 (By similarity).</text>
</comment>
<comment type="subunit">
    <text evidence="1 2">Interacts with glycoprotein H (gH); this interaction is necessary for the correct processing and cell surface expression of gH (By similarity). Forms the envelope pentamer complex (PC) composed of gH, gL, UL128, UL130, and UL131A. The pentamer interacts with host NRP2. Forms the envelope trimer complex composed of gH, gL, and gO. The trimer interacts with host PDGFRA (By similarity). The trimer also interacts with host EPHA2 (By similarity).</text>
</comment>
<comment type="subcellular location">
    <subcellularLocation>
        <location evidence="2">Virion membrane</location>
        <topology evidence="2">Peripheral membrane protein</topology>
        <orientation evidence="2">Extracellular side</orientation>
    </subcellularLocation>
    <subcellularLocation>
        <location evidence="2">Host cell membrane</location>
        <topology evidence="2">Peripheral membrane protein</topology>
        <orientation evidence="2">Extracellular side</orientation>
    </subcellularLocation>
    <subcellularLocation>
        <location evidence="2">Host Golgi apparatus</location>
        <location evidence="2">Host trans-Golgi network</location>
    </subcellularLocation>
    <text evidence="2">gL associates with the extravirion surface through its binding to gH. During virion morphogenesis, this protein probably accumulates in the host trans-Golgi where secondary envelopment occurs.</text>
</comment>
<comment type="similarity">
    <text evidence="3">Belongs to the herpesviridae glycoprotein L (gL) family. Betaherpesvirinae gL subfamily.</text>
</comment>